<reference key="1">
    <citation type="journal article" date="2003" name="Nat. Genet.">
        <title>Comparative analysis of the genome sequences of Bordetella pertussis, Bordetella parapertussis and Bordetella bronchiseptica.</title>
        <authorList>
            <person name="Parkhill J."/>
            <person name="Sebaihia M."/>
            <person name="Preston A."/>
            <person name="Murphy L.D."/>
            <person name="Thomson N.R."/>
            <person name="Harris D.E."/>
            <person name="Holden M.T.G."/>
            <person name="Churcher C.M."/>
            <person name="Bentley S.D."/>
            <person name="Mungall K.L."/>
            <person name="Cerdeno-Tarraga A.-M."/>
            <person name="Temple L."/>
            <person name="James K.D."/>
            <person name="Harris B."/>
            <person name="Quail M.A."/>
            <person name="Achtman M."/>
            <person name="Atkin R."/>
            <person name="Baker S."/>
            <person name="Basham D."/>
            <person name="Bason N."/>
            <person name="Cherevach I."/>
            <person name="Chillingworth T."/>
            <person name="Collins M."/>
            <person name="Cronin A."/>
            <person name="Davis P."/>
            <person name="Doggett J."/>
            <person name="Feltwell T."/>
            <person name="Goble A."/>
            <person name="Hamlin N."/>
            <person name="Hauser H."/>
            <person name="Holroyd S."/>
            <person name="Jagels K."/>
            <person name="Leather S."/>
            <person name="Moule S."/>
            <person name="Norberczak H."/>
            <person name="O'Neil S."/>
            <person name="Ormond D."/>
            <person name="Price C."/>
            <person name="Rabbinowitsch E."/>
            <person name="Rutter S."/>
            <person name="Sanders M."/>
            <person name="Saunders D."/>
            <person name="Seeger K."/>
            <person name="Sharp S."/>
            <person name="Simmonds M."/>
            <person name="Skelton J."/>
            <person name="Squares R."/>
            <person name="Squares S."/>
            <person name="Stevens K."/>
            <person name="Unwin L."/>
            <person name="Whitehead S."/>
            <person name="Barrell B.G."/>
            <person name="Maskell D.J."/>
        </authorList>
    </citation>
    <scope>NUCLEOTIDE SEQUENCE [LARGE SCALE GENOMIC DNA]</scope>
    <source>
        <strain>ATCC BAA-588 / NCTC 13252 / RB50</strain>
    </source>
</reference>
<protein>
    <recommendedName>
        <fullName evidence="1">3-hydroxyacyl-[acyl-carrier-protein] dehydratase FabZ</fullName>
        <ecNumber evidence="1">4.2.1.59</ecNumber>
    </recommendedName>
    <alternativeName>
        <fullName evidence="1">(3R)-hydroxymyristoyl-[acyl-carrier-protein] dehydratase</fullName>
        <shortName evidence="1">(3R)-hydroxymyristoyl-ACP dehydrase</shortName>
    </alternativeName>
    <alternativeName>
        <fullName evidence="1">Beta-hydroxyacyl-ACP dehydratase</fullName>
    </alternativeName>
</protein>
<accession>Q7WJ83</accession>
<dbReference type="EC" id="4.2.1.59" evidence="1"/>
<dbReference type="EMBL" id="BX640444">
    <property type="protein sequence ID" value="CAE33109.1"/>
    <property type="molecule type" value="Genomic_DNA"/>
</dbReference>
<dbReference type="RefSeq" id="WP_003811776.1">
    <property type="nucleotide sequence ID" value="NC_002927.3"/>
</dbReference>
<dbReference type="SMR" id="Q7WJ83"/>
<dbReference type="GeneID" id="69601341"/>
<dbReference type="KEGG" id="bbr:BB2616"/>
<dbReference type="eggNOG" id="COG0764">
    <property type="taxonomic scope" value="Bacteria"/>
</dbReference>
<dbReference type="HOGENOM" id="CLU_078912_1_0_4"/>
<dbReference type="Proteomes" id="UP000001027">
    <property type="component" value="Chromosome"/>
</dbReference>
<dbReference type="GO" id="GO:0005737">
    <property type="term" value="C:cytoplasm"/>
    <property type="evidence" value="ECO:0007669"/>
    <property type="project" value="UniProtKB-SubCell"/>
</dbReference>
<dbReference type="GO" id="GO:0016020">
    <property type="term" value="C:membrane"/>
    <property type="evidence" value="ECO:0007669"/>
    <property type="project" value="GOC"/>
</dbReference>
<dbReference type="GO" id="GO:0019171">
    <property type="term" value="F:(3R)-hydroxyacyl-[acyl-carrier-protein] dehydratase activity"/>
    <property type="evidence" value="ECO:0007669"/>
    <property type="project" value="UniProtKB-EC"/>
</dbReference>
<dbReference type="GO" id="GO:0006633">
    <property type="term" value="P:fatty acid biosynthetic process"/>
    <property type="evidence" value="ECO:0007669"/>
    <property type="project" value="UniProtKB-UniRule"/>
</dbReference>
<dbReference type="GO" id="GO:0009245">
    <property type="term" value="P:lipid A biosynthetic process"/>
    <property type="evidence" value="ECO:0007669"/>
    <property type="project" value="UniProtKB-UniRule"/>
</dbReference>
<dbReference type="CDD" id="cd01288">
    <property type="entry name" value="FabZ"/>
    <property type="match status" value="1"/>
</dbReference>
<dbReference type="FunFam" id="3.10.129.10:FF:000001">
    <property type="entry name" value="3-hydroxyacyl-[acyl-carrier-protein] dehydratase FabZ"/>
    <property type="match status" value="1"/>
</dbReference>
<dbReference type="Gene3D" id="3.10.129.10">
    <property type="entry name" value="Hotdog Thioesterase"/>
    <property type="match status" value="1"/>
</dbReference>
<dbReference type="HAMAP" id="MF_00406">
    <property type="entry name" value="FabZ"/>
    <property type="match status" value="1"/>
</dbReference>
<dbReference type="InterPro" id="IPR013114">
    <property type="entry name" value="FabA_FabZ"/>
</dbReference>
<dbReference type="InterPro" id="IPR010084">
    <property type="entry name" value="FabZ"/>
</dbReference>
<dbReference type="InterPro" id="IPR029069">
    <property type="entry name" value="HotDog_dom_sf"/>
</dbReference>
<dbReference type="NCBIfam" id="TIGR01750">
    <property type="entry name" value="fabZ"/>
    <property type="match status" value="1"/>
</dbReference>
<dbReference type="NCBIfam" id="NF000582">
    <property type="entry name" value="PRK00006.1"/>
    <property type="match status" value="1"/>
</dbReference>
<dbReference type="PANTHER" id="PTHR30272">
    <property type="entry name" value="3-HYDROXYACYL-[ACYL-CARRIER-PROTEIN] DEHYDRATASE"/>
    <property type="match status" value="1"/>
</dbReference>
<dbReference type="PANTHER" id="PTHR30272:SF1">
    <property type="entry name" value="3-HYDROXYACYL-[ACYL-CARRIER-PROTEIN] DEHYDRATASE"/>
    <property type="match status" value="1"/>
</dbReference>
<dbReference type="Pfam" id="PF07977">
    <property type="entry name" value="FabA"/>
    <property type="match status" value="1"/>
</dbReference>
<dbReference type="SUPFAM" id="SSF54637">
    <property type="entry name" value="Thioesterase/thiol ester dehydrase-isomerase"/>
    <property type="match status" value="1"/>
</dbReference>
<sequence>MELDIKGIMDRLPHRYPMLLIDRVLEMVPGKSIVAIKNVSINEPFFTGHFPHHPVMPGVLIVEAMAQASALFSFTDENGGLKCDGAKTAYYLVGIDGARFRKPVVPGDQLRLEVEAERLSRTICKYQGRALVDGQLVAEAKLMCAIRSLEE</sequence>
<proteinExistence type="inferred from homology"/>
<keyword id="KW-0963">Cytoplasm</keyword>
<keyword id="KW-0441">Lipid A biosynthesis</keyword>
<keyword id="KW-0444">Lipid biosynthesis</keyword>
<keyword id="KW-0443">Lipid metabolism</keyword>
<keyword id="KW-0456">Lyase</keyword>
<organism>
    <name type="scientific">Bordetella bronchiseptica (strain ATCC BAA-588 / NCTC 13252 / RB50)</name>
    <name type="common">Alcaligenes bronchisepticus</name>
    <dbReference type="NCBI Taxonomy" id="257310"/>
    <lineage>
        <taxon>Bacteria</taxon>
        <taxon>Pseudomonadati</taxon>
        <taxon>Pseudomonadota</taxon>
        <taxon>Betaproteobacteria</taxon>
        <taxon>Burkholderiales</taxon>
        <taxon>Alcaligenaceae</taxon>
        <taxon>Bordetella</taxon>
    </lineage>
</organism>
<evidence type="ECO:0000255" key="1">
    <source>
        <dbReference type="HAMAP-Rule" id="MF_00406"/>
    </source>
</evidence>
<gene>
    <name evidence="1" type="primary">fabZ</name>
    <name type="ordered locus">BB2616</name>
</gene>
<name>FABZ_BORBR</name>
<feature type="chain" id="PRO_0000091645" description="3-hydroxyacyl-[acyl-carrier-protein] dehydratase FabZ">
    <location>
        <begin position="1"/>
        <end position="151"/>
    </location>
</feature>
<feature type="active site" evidence="1">
    <location>
        <position position="49"/>
    </location>
</feature>
<comment type="function">
    <text evidence="1">Involved in unsaturated fatty acids biosynthesis. Catalyzes the dehydration of short chain beta-hydroxyacyl-ACPs and long chain saturated and unsaturated beta-hydroxyacyl-ACPs.</text>
</comment>
<comment type="catalytic activity">
    <reaction evidence="1">
        <text>a (3R)-hydroxyacyl-[ACP] = a (2E)-enoyl-[ACP] + H2O</text>
        <dbReference type="Rhea" id="RHEA:13097"/>
        <dbReference type="Rhea" id="RHEA-COMP:9925"/>
        <dbReference type="Rhea" id="RHEA-COMP:9945"/>
        <dbReference type="ChEBI" id="CHEBI:15377"/>
        <dbReference type="ChEBI" id="CHEBI:78784"/>
        <dbReference type="ChEBI" id="CHEBI:78827"/>
        <dbReference type="EC" id="4.2.1.59"/>
    </reaction>
</comment>
<comment type="subcellular location">
    <subcellularLocation>
        <location evidence="1">Cytoplasm</location>
    </subcellularLocation>
</comment>
<comment type="similarity">
    <text evidence="1">Belongs to the thioester dehydratase family. FabZ subfamily.</text>
</comment>